<reference key="1">
    <citation type="journal article" date="2002" name="Nature">
        <title>Sequence and analysis of chromosome 2 of Dictyostelium discoideum.</title>
        <authorList>
            <person name="Gloeckner G."/>
            <person name="Eichinger L."/>
            <person name="Szafranski K."/>
            <person name="Pachebat J.A."/>
            <person name="Bankier A.T."/>
            <person name="Dear P.H."/>
            <person name="Lehmann R."/>
            <person name="Baumgart C."/>
            <person name="Parra G."/>
            <person name="Abril J.F."/>
            <person name="Guigo R."/>
            <person name="Kumpf K."/>
            <person name="Tunggal B."/>
            <person name="Cox E.C."/>
            <person name="Quail M.A."/>
            <person name="Platzer M."/>
            <person name="Rosenthal A."/>
            <person name="Noegel A.A."/>
        </authorList>
    </citation>
    <scope>NUCLEOTIDE SEQUENCE [LARGE SCALE GENOMIC DNA]</scope>
    <source>
        <strain>AX4</strain>
    </source>
</reference>
<reference key="2">
    <citation type="journal article" date="2005" name="Nature">
        <title>The genome of the social amoeba Dictyostelium discoideum.</title>
        <authorList>
            <person name="Eichinger L."/>
            <person name="Pachebat J.A."/>
            <person name="Gloeckner G."/>
            <person name="Rajandream M.A."/>
            <person name="Sucgang R."/>
            <person name="Berriman M."/>
            <person name="Song J."/>
            <person name="Olsen R."/>
            <person name="Szafranski K."/>
            <person name="Xu Q."/>
            <person name="Tunggal B."/>
            <person name="Kummerfeld S."/>
            <person name="Madera M."/>
            <person name="Konfortov B.A."/>
            <person name="Rivero F."/>
            <person name="Bankier A.T."/>
            <person name="Lehmann R."/>
            <person name="Hamlin N."/>
            <person name="Davies R."/>
            <person name="Gaudet P."/>
            <person name="Fey P."/>
            <person name="Pilcher K."/>
            <person name="Chen G."/>
            <person name="Saunders D."/>
            <person name="Sodergren E.J."/>
            <person name="Davis P."/>
            <person name="Kerhornou A."/>
            <person name="Nie X."/>
            <person name="Hall N."/>
            <person name="Anjard C."/>
            <person name="Hemphill L."/>
            <person name="Bason N."/>
            <person name="Farbrother P."/>
            <person name="Desany B."/>
            <person name="Just E."/>
            <person name="Morio T."/>
            <person name="Rost R."/>
            <person name="Churcher C.M."/>
            <person name="Cooper J."/>
            <person name="Haydock S."/>
            <person name="van Driessche N."/>
            <person name="Cronin A."/>
            <person name="Goodhead I."/>
            <person name="Muzny D.M."/>
            <person name="Mourier T."/>
            <person name="Pain A."/>
            <person name="Lu M."/>
            <person name="Harper D."/>
            <person name="Lindsay R."/>
            <person name="Hauser H."/>
            <person name="James K.D."/>
            <person name="Quiles M."/>
            <person name="Madan Babu M."/>
            <person name="Saito T."/>
            <person name="Buchrieser C."/>
            <person name="Wardroper A."/>
            <person name="Felder M."/>
            <person name="Thangavelu M."/>
            <person name="Johnson D."/>
            <person name="Knights A."/>
            <person name="Loulseged H."/>
            <person name="Mungall K.L."/>
            <person name="Oliver K."/>
            <person name="Price C."/>
            <person name="Quail M.A."/>
            <person name="Urushihara H."/>
            <person name="Hernandez J."/>
            <person name="Rabbinowitsch E."/>
            <person name="Steffen D."/>
            <person name="Sanders M."/>
            <person name="Ma J."/>
            <person name="Kohara Y."/>
            <person name="Sharp S."/>
            <person name="Simmonds M.N."/>
            <person name="Spiegler S."/>
            <person name="Tivey A."/>
            <person name="Sugano S."/>
            <person name="White B."/>
            <person name="Walker D."/>
            <person name="Woodward J.R."/>
            <person name="Winckler T."/>
            <person name="Tanaka Y."/>
            <person name="Shaulsky G."/>
            <person name="Schleicher M."/>
            <person name="Weinstock G.M."/>
            <person name="Rosenthal A."/>
            <person name="Cox E.C."/>
            <person name="Chisholm R.L."/>
            <person name="Gibbs R.A."/>
            <person name="Loomis W.F."/>
            <person name="Platzer M."/>
            <person name="Kay R.R."/>
            <person name="Williams J.G."/>
            <person name="Dear P.H."/>
            <person name="Noegel A.A."/>
            <person name="Barrell B.G."/>
            <person name="Kuspa A."/>
        </authorList>
    </citation>
    <scope>NUCLEOTIDE SEQUENCE [LARGE SCALE GENOMIC DNA]</scope>
    <source>
        <strain>AX4</strain>
    </source>
</reference>
<reference key="3">
    <citation type="submission" date="2009-07" db="UniProtKB">
        <authorList>
            <person name="Bienvenut W.V."/>
            <person name="Ura S."/>
            <person name="Insall R.H."/>
        </authorList>
    </citation>
    <scope>PROTEIN SEQUENCE OF 2-39; 65-80; 86-105; 141-151; 296-315; 379-416; 442-461; 475-495; 497-551; 565-580; 595-610; 617-635; 644-690; 699-726; 731-768; 778-823; 832-847; 884-904; 945-982; 987-1008; 1072-1094; 1119-1131; 1165-1180; 1247-1283; 1292-1319; 1402-1424; 1442-1454 AND 1471-1479</scope>
    <scope>CLEAVAGE OF INITIATOR METHIONINE</scope>
    <scope>PHOSPHORYLATION AT THR-535 AND SER-1249</scope>
    <scope>IDENTIFICATION BY MASS SPECTROMETRY</scope>
    <source>
        <strain>AX2</strain>
    </source>
</reference>
<reference key="4">
    <citation type="submission" date="2008-10" db="UniProtKB">
        <authorList>
            <person name="Bienvenut W.V."/>
            <person name="Sumpton D."/>
            <person name="Ura S."/>
            <person name="Insall R.H."/>
        </authorList>
    </citation>
    <scope>PROTEIN SEQUENCE OF 66-79; 140-150; 418-435; 564-579; 617-634; 730-761; 1441-1455 AND 1470-1478</scope>
    <scope>IDENTIFICATION BY MASS SPECTROMETRY</scope>
    <source>
        <strain>AX2</strain>
    </source>
</reference>
<evidence type="ECO:0000250" key="1">
    <source>
        <dbReference type="UniProtKB" id="Q9Y4E1"/>
    </source>
</evidence>
<evidence type="ECO:0000256" key="2">
    <source>
        <dbReference type="SAM" id="MobiDB-lite"/>
    </source>
</evidence>
<evidence type="ECO:0000269" key="3">
    <source ref="3"/>
</evidence>
<evidence type="ECO:0000305" key="4"/>
<gene>
    <name evidence="1" type="primary">washc2</name>
    <name type="synonym">fam21</name>
    <name type="ORF">DDB_G0276221</name>
</gene>
<sequence>MPEEQPQQQQQPVREQPSNPDDVPWKKVWTINEMRDSAKDWNLSSDAGLLNYMQDFANKLIYKTKELEFQVDELVKDSKSIHVKVHNTFDQFLMLSNTQFIENRVYEDNSELNNEQNEQTDKPQQQEITEEILIPKFSKAILIGLEALEKANFVNAALEISEQSNSNNNNNDYQQQMNGSIAASSAEGGLVEGGEQAGTDAQPSANTEKKKEKLDHYLRYPLPHIIGSQQFHQDDFCGLFIEDSDSDSSDEEDEEDVDAEDGSDESSSESSSDDDDEKDEQQQSTLFLTDEQPKQQNFFFQDEDATSENNANKKVSESLFEDEDDIFGDKPVASKKSSNSYTSSLSDILGGDDEDDLFGGSKKKQQQQEDADGDEPTKKKDPFADELNNTLSSKNKGGDDDLFGGSSSTTTTSKPKKKSMFDDDLFGDSEETPAPKSSASRKVTFDDSLFGDDETALPTSKKDSTTTSSQPQQKKTLNDLFTDEDLTPATKKETKKSSSLSFLDGMDEDDLFGTPKPKSTTTSAAPTATTTKPPTPIPDSDASGSESTTGKSSPAPKKPVGGVKLFDFDAAGGDIFSGKKVGTGGKSSPSPAPKTESKASEDDFFSSDKKSTSATKKDAEIFGSEGGLLDVPEKKIKRHDPKKYVDSDVLGIDSISSDKNKPKVQDPFGVGAAGSNDDDSFDIPKANSKKEQETKPTKSTTTDDDLDIPKAPTTATTTTTTKPAVKKSTKSNFFDFEDTDSPLSSNKKSGGDDDLFSFDSSKTTTETKKQPITEEPKKKQDTTTTPSIDPFSGLDIKKPSEASISPASPVSTIESDPLFGDIKKPVAQKPKKTNFFDGDLTKDEPAKSEPTKVEPTKVEPTKAEPTKVEPAKVEPTKVESDKKESNPLGGGDEESVFGDFSIKKNPTTSSSTTATENKPAVKKSTKSNFFDFEDTDSPLSSNKKNDDDIFSSTTKKSTTTTTTTTSSKDFFGDLDTSSGNKKVEEKKSSDFDSFFSGSDDPLGITKPKSKTTTTPPLTSTTANIESDDPLSLGLPTFTNNNNNNNAKPPPPPSPLGEDVPSPLTSNNTKNRTKSIGSMFEAQQQLQQQQQEKNRSESPTSEKAEPTKKTSNISSLQNKLSLNPNMFLPGSKMPKKKKEESENEDDSSTNNDNDSSATDLSDSGRSSPSVTSPTLSGGRPRRNTVSSRNNNDSEESEPVKELTHATASRPKSGGRRPPTRKSGTSAPNRSESPTPTQKSDSESEKVRSSSPITTKPVVSEPTKKTISNTSFFDDIPSEKTSSGKSSPSPTIKSTSEKVTIDPLGDIFASTTTKPTASETKAALSSAPKKSEPETPKETPKETPKEKEQTKEKEQPKETPKTTTTKKSTKAVETKSETDSFFDDIPDIISRPKASVKSAAAKKASSTTKPVISDDIFDDITSTTSKSTTTTTTTTTTKAKSTKAVDNLFDDDTNTTTKATPTKATPSKSKPKAKNVENLFD</sequence>
<comment type="subunit">
    <text evidence="1">Probable component of the WASH complex.</text>
</comment>
<comment type="similarity">
    <text evidence="4">Belongs to the FAM21 family.</text>
</comment>
<feature type="initiator methionine" description="Removed" evidence="3">
    <location>
        <position position="1"/>
    </location>
</feature>
<feature type="chain" id="PRO_0000388365" description="WASH complex subunit 2">
    <location>
        <begin position="2"/>
        <end position="1479"/>
    </location>
</feature>
<feature type="region of interest" description="Disordered" evidence="2">
    <location>
        <begin position="1"/>
        <end position="25"/>
    </location>
</feature>
<feature type="region of interest" description="Disordered" evidence="2">
    <location>
        <begin position="188"/>
        <end position="210"/>
    </location>
</feature>
<feature type="region of interest" description="Disordered" evidence="2">
    <location>
        <begin position="240"/>
        <end position="564"/>
    </location>
</feature>
<feature type="region of interest" description="Disordered" evidence="2">
    <location>
        <begin position="576"/>
        <end position="1383"/>
    </location>
</feature>
<feature type="region of interest" description="Disordered" evidence="2">
    <location>
        <begin position="1419"/>
        <end position="1479"/>
    </location>
</feature>
<feature type="compositionally biased region" description="Low complexity" evidence="2">
    <location>
        <begin position="1"/>
        <end position="17"/>
    </location>
</feature>
<feature type="compositionally biased region" description="Acidic residues" evidence="2">
    <location>
        <begin position="242"/>
        <end position="279"/>
    </location>
</feature>
<feature type="compositionally biased region" description="Low complexity" evidence="2">
    <location>
        <begin position="334"/>
        <end position="349"/>
    </location>
</feature>
<feature type="compositionally biased region" description="Acidic residues" evidence="2">
    <location>
        <begin position="422"/>
        <end position="431"/>
    </location>
</feature>
<feature type="compositionally biased region" description="Low complexity" evidence="2">
    <location>
        <begin position="465"/>
        <end position="475"/>
    </location>
</feature>
<feature type="compositionally biased region" description="Low complexity" evidence="2">
    <location>
        <begin position="514"/>
        <end position="532"/>
    </location>
</feature>
<feature type="compositionally biased region" description="Polar residues" evidence="2">
    <location>
        <begin position="542"/>
        <end position="552"/>
    </location>
</feature>
<feature type="compositionally biased region" description="Basic and acidic residues" evidence="2">
    <location>
        <begin position="595"/>
        <end position="620"/>
    </location>
</feature>
<feature type="compositionally biased region" description="Low complexity" evidence="2">
    <location>
        <begin position="709"/>
        <end position="723"/>
    </location>
</feature>
<feature type="compositionally biased region" description="Basic and acidic residues" evidence="2">
    <location>
        <begin position="765"/>
        <end position="781"/>
    </location>
</feature>
<feature type="compositionally biased region" description="Polar residues" evidence="2">
    <location>
        <begin position="802"/>
        <end position="814"/>
    </location>
</feature>
<feature type="compositionally biased region" description="Basic and acidic residues" evidence="2">
    <location>
        <begin position="839"/>
        <end position="885"/>
    </location>
</feature>
<feature type="compositionally biased region" description="Polar residues" evidence="2">
    <location>
        <begin position="904"/>
        <end position="916"/>
    </location>
</feature>
<feature type="compositionally biased region" description="Low complexity" evidence="2">
    <location>
        <begin position="951"/>
        <end position="968"/>
    </location>
</feature>
<feature type="compositionally biased region" description="Basic and acidic residues" evidence="2">
    <location>
        <begin position="981"/>
        <end position="990"/>
    </location>
</feature>
<feature type="compositionally biased region" description="Low complexity" evidence="2">
    <location>
        <begin position="991"/>
        <end position="1000"/>
    </location>
</feature>
<feature type="compositionally biased region" description="Low complexity" evidence="2">
    <location>
        <begin position="1010"/>
        <end position="1021"/>
    </location>
</feature>
<feature type="compositionally biased region" description="Polar residues" evidence="2">
    <location>
        <begin position="1062"/>
        <end position="1075"/>
    </location>
</feature>
<feature type="compositionally biased region" description="Basic and acidic residues" evidence="2">
    <location>
        <begin position="1091"/>
        <end position="1107"/>
    </location>
</feature>
<feature type="compositionally biased region" description="Polar residues" evidence="2">
    <location>
        <begin position="1108"/>
        <end position="1123"/>
    </location>
</feature>
<feature type="compositionally biased region" description="Low complexity" evidence="2">
    <location>
        <begin position="1147"/>
        <end position="1162"/>
    </location>
</feature>
<feature type="compositionally biased region" description="Polar residues" evidence="2">
    <location>
        <begin position="1163"/>
        <end position="1174"/>
    </location>
</feature>
<feature type="compositionally biased region" description="Polar residues" evidence="2">
    <location>
        <begin position="1220"/>
        <end position="1236"/>
    </location>
</feature>
<feature type="compositionally biased region" description="Low complexity" evidence="2">
    <location>
        <begin position="1277"/>
        <end position="1292"/>
    </location>
</feature>
<feature type="compositionally biased region" description="Polar residues" evidence="2">
    <location>
        <begin position="1307"/>
        <end position="1317"/>
    </location>
</feature>
<feature type="compositionally biased region" description="Basic and acidic residues" evidence="2">
    <location>
        <begin position="1327"/>
        <end position="1358"/>
    </location>
</feature>
<feature type="compositionally biased region" description="Low complexity" evidence="2">
    <location>
        <begin position="1419"/>
        <end position="1445"/>
    </location>
</feature>
<feature type="compositionally biased region" description="Low complexity" evidence="2">
    <location>
        <begin position="1452"/>
        <end position="1466"/>
    </location>
</feature>
<feature type="modified residue" description="Phosphothreonine" evidence="3">
    <location>
        <position position="535"/>
    </location>
</feature>
<feature type="modified residue" description="Phosphoserine" evidence="3">
    <location>
        <position position="1249"/>
    </location>
</feature>
<dbReference type="EMBL" id="AAFI02000014">
    <property type="protein sequence ID" value="EAL69410.1"/>
    <property type="molecule type" value="Genomic_DNA"/>
</dbReference>
<dbReference type="RefSeq" id="XP_643271.1">
    <property type="nucleotide sequence ID" value="XM_638179.1"/>
</dbReference>
<dbReference type="FunCoup" id="Q552E2">
    <property type="interactions" value="624"/>
</dbReference>
<dbReference type="STRING" id="44689.Q552E2"/>
<dbReference type="GlyGen" id="Q552E2">
    <property type="glycosylation" value="2 sites"/>
</dbReference>
<dbReference type="PaxDb" id="44689-DDB0232153"/>
<dbReference type="EnsemblProtists" id="EAL69410">
    <property type="protein sequence ID" value="EAL69410"/>
    <property type="gene ID" value="DDB_G0276221"/>
</dbReference>
<dbReference type="GeneID" id="8620314"/>
<dbReference type="KEGG" id="ddi:DDB_G0276221"/>
<dbReference type="dictyBase" id="DDB_G0276221">
    <property type="gene designation" value="fam21"/>
</dbReference>
<dbReference type="VEuPathDB" id="AmoebaDB:DDB_G0276221"/>
<dbReference type="eggNOG" id="ENOG502QTIY">
    <property type="taxonomic scope" value="Eukaryota"/>
</dbReference>
<dbReference type="HOGENOM" id="CLU_249774_0_0_1"/>
<dbReference type="InParanoid" id="Q552E2"/>
<dbReference type="OMA" id="IHTIFYD"/>
<dbReference type="PRO" id="PR:Q552E2"/>
<dbReference type="Proteomes" id="UP000002195">
    <property type="component" value="Chromosome 2"/>
</dbReference>
<dbReference type="GO" id="GO:0005829">
    <property type="term" value="C:cytosol"/>
    <property type="evidence" value="ECO:0007669"/>
    <property type="project" value="GOC"/>
</dbReference>
<dbReference type="GO" id="GO:0005769">
    <property type="term" value="C:early endosome"/>
    <property type="evidence" value="ECO:0000318"/>
    <property type="project" value="GO_Central"/>
</dbReference>
<dbReference type="GO" id="GO:0061474">
    <property type="term" value="C:phagolysosome membrane"/>
    <property type="evidence" value="ECO:0000314"/>
    <property type="project" value="dictyBase"/>
</dbReference>
<dbReference type="GO" id="GO:0071203">
    <property type="term" value="C:WASH complex"/>
    <property type="evidence" value="ECO:0000314"/>
    <property type="project" value="dictyBase"/>
</dbReference>
<dbReference type="GO" id="GO:1901981">
    <property type="term" value="F:phosphatidylinositol phosphate binding"/>
    <property type="evidence" value="ECO:0000318"/>
    <property type="project" value="GO_Central"/>
</dbReference>
<dbReference type="GO" id="GO:1905394">
    <property type="term" value="F:retromer complex binding"/>
    <property type="evidence" value="ECO:0000318"/>
    <property type="project" value="GO_Central"/>
</dbReference>
<dbReference type="GO" id="GO:0030837">
    <property type="term" value="P:negative regulation of actin filament polymerization"/>
    <property type="evidence" value="ECO:0000315"/>
    <property type="project" value="dictyBase"/>
</dbReference>
<dbReference type="GO" id="GO:0036010">
    <property type="term" value="P:protein localization to endosome"/>
    <property type="evidence" value="ECO:0000318"/>
    <property type="project" value="GO_Central"/>
</dbReference>
<dbReference type="GO" id="GO:0042147">
    <property type="term" value="P:retrograde transport, endosome to Golgi"/>
    <property type="evidence" value="ECO:0000318"/>
    <property type="project" value="GO_Central"/>
</dbReference>
<accession>Q552E2</accession>
<accession>Q75JI1</accession>
<protein>
    <recommendedName>
        <fullName evidence="1">WASH complex subunit 2</fullName>
    </recommendedName>
</protein>
<organism>
    <name type="scientific">Dictyostelium discoideum</name>
    <name type="common">Social amoeba</name>
    <dbReference type="NCBI Taxonomy" id="44689"/>
    <lineage>
        <taxon>Eukaryota</taxon>
        <taxon>Amoebozoa</taxon>
        <taxon>Evosea</taxon>
        <taxon>Eumycetozoa</taxon>
        <taxon>Dictyostelia</taxon>
        <taxon>Dictyosteliales</taxon>
        <taxon>Dictyosteliaceae</taxon>
        <taxon>Dictyostelium</taxon>
    </lineage>
</organism>
<proteinExistence type="evidence at protein level"/>
<name>WASC2_DICDI</name>
<keyword id="KW-0903">Direct protein sequencing</keyword>
<keyword id="KW-0597">Phosphoprotein</keyword>
<keyword id="KW-1185">Reference proteome</keyword>